<comment type="function">
    <text evidence="1">Produces ATP from ADP in the presence of a proton gradient across the membrane.</text>
</comment>
<comment type="subunit">
    <text>F-type ATPases have 2 components, CF(1) - the catalytic core - and CF(0) - the membrane proton channel. CF(1) has five subunits: alpha(3), beta(3), gamma(1), delta(1), epsilon(1). CF(0) has three main subunits: a, b and c.</text>
</comment>
<comment type="subcellular location">
    <subcellularLocation>
        <location evidence="1">Cell inner membrane</location>
        <topology evidence="1">Peripheral membrane protein</topology>
    </subcellularLocation>
</comment>
<comment type="similarity">
    <text evidence="2">Belongs to the ATPase epsilon chain family.</text>
</comment>
<gene>
    <name type="primary">atpC</name>
</gene>
<name>ATPE_FUSBL</name>
<sequence length="130" mass="13281">MAATLQFDLVSPERRLASVQATEVQIPGAAGDMTAMQGHAPTITTLRPGILRAVSAEGTKAYVVTGGFAEISATGVSVLAERAVPLDEMDAKLMDQLVADASAASSVGVDKDTAEKAMSDLQAMKAAAGF</sequence>
<organism>
    <name type="scientific">Fuscovulum blasticum</name>
    <name type="common">Rhodobacter blasticus</name>
    <name type="synonym">Rhodopseudomonas blastica</name>
    <dbReference type="NCBI Taxonomy" id="1075"/>
    <lineage>
        <taxon>Bacteria</taxon>
        <taxon>Pseudomonadati</taxon>
        <taxon>Pseudomonadota</taxon>
        <taxon>Alphaproteobacteria</taxon>
        <taxon>Rhodobacterales</taxon>
        <taxon>Paracoccaceae</taxon>
        <taxon>Pseudogemmobacter</taxon>
    </lineage>
</organism>
<feature type="chain" id="PRO_0000188188" description="ATP synthase epsilon chain">
    <location>
        <begin position="1"/>
        <end position="130"/>
    </location>
</feature>
<protein>
    <recommendedName>
        <fullName>ATP synthase epsilon chain</fullName>
    </recommendedName>
    <alternativeName>
        <fullName>ATP synthase F1 sector epsilon subunit</fullName>
    </alternativeName>
    <alternativeName>
        <fullName>F-ATPase epsilon subunit</fullName>
    </alternativeName>
</protein>
<keyword id="KW-0066">ATP synthesis</keyword>
<keyword id="KW-0997">Cell inner membrane</keyword>
<keyword id="KW-1003">Cell membrane</keyword>
<keyword id="KW-0139">CF(1)</keyword>
<keyword id="KW-0375">Hydrogen ion transport</keyword>
<keyword id="KW-0406">Ion transport</keyword>
<keyword id="KW-0472">Membrane</keyword>
<keyword id="KW-0813">Transport</keyword>
<accession>P05441</accession>
<dbReference type="EMBL" id="Z00018">
    <property type="protein sequence ID" value="CAA77304.1"/>
    <property type="molecule type" value="Genomic_DNA"/>
</dbReference>
<dbReference type="PIR" id="S04676">
    <property type="entry name" value="S04676"/>
</dbReference>
<dbReference type="SMR" id="P05441"/>
<dbReference type="KEGG" id="rbl:B6K69_14560"/>
<dbReference type="OrthoDB" id="9799969at2"/>
<dbReference type="GO" id="GO:0005886">
    <property type="term" value="C:plasma membrane"/>
    <property type="evidence" value="ECO:0007669"/>
    <property type="project" value="UniProtKB-SubCell"/>
</dbReference>
<dbReference type="GO" id="GO:0045259">
    <property type="term" value="C:proton-transporting ATP synthase complex"/>
    <property type="evidence" value="ECO:0007669"/>
    <property type="project" value="UniProtKB-KW"/>
</dbReference>
<dbReference type="GO" id="GO:0005524">
    <property type="term" value="F:ATP binding"/>
    <property type="evidence" value="ECO:0007669"/>
    <property type="project" value="UniProtKB-UniRule"/>
</dbReference>
<dbReference type="GO" id="GO:0046933">
    <property type="term" value="F:proton-transporting ATP synthase activity, rotational mechanism"/>
    <property type="evidence" value="ECO:0007669"/>
    <property type="project" value="UniProtKB-UniRule"/>
</dbReference>
<dbReference type="CDD" id="cd12152">
    <property type="entry name" value="F1-ATPase_delta"/>
    <property type="match status" value="1"/>
</dbReference>
<dbReference type="Gene3D" id="2.60.15.10">
    <property type="entry name" value="F0F1 ATP synthase delta/epsilon subunit, N-terminal"/>
    <property type="match status" value="1"/>
</dbReference>
<dbReference type="HAMAP" id="MF_00530">
    <property type="entry name" value="ATP_synth_epsil_bac"/>
    <property type="match status" value="1"/>
</dbReference>
<dbReference type="InterPro" id="IPR001469">
    <property type="entry name" value="ATP_synth_F1_dsu/esu"/>
</dbReference>
<dbReference type="InterPro" id="IPR020546">
    <property type="entry name" value="ATP_synth_F1_dsu/esu_N"/>
</dbReference>
<dbReference type="InterPro" id="IPR036771">
    <property type="entry name" value="ATPsynth_dsu/esu_N"/>
</dbReference>
<dbReference type="NCBIfam" id="TIGR01216">
    <property type="entry name" value="ATP_synt_epsi"/>
    <property type="match status" value="1"/>
</dbReference>
<dbReference type="NCBIfam" id="NF009978">
    <property type="entry name" value="PRK13443.1"/>
    <property type="match status" value="1"/>
</dbReference>
<dbReference type="PANTHER" id="PTHR13822">
    <property type="entry name" value="ATP SYNTHASE DELTA/EPSILON CHAIN"/>
    <property type="match status" value="1"/>
</dbReference>
<dbReference type="PANTHER" id="PTHR13822:SF10">
    <property type="entry name" value="ATP SYNTHASE EPSILON CHAIN, CHLOROPLASTIC"/>
    <property type="match status" value="1"/>
</dbReference>
<dbReference type="Pfam" id="PF02823">
    <property type="entry name" value="ATP-synt_DE_N"/>
    <property type="match status" value="1"/>
</dbReference>
<dbReference type="SUPFAM" id="SSF51344">
    <property type="entry name" value="Epsilon subunit of F1F0-ATP synthase N-terminal domain"/>
    <property type="match status" value="1"/>
</dbReference>
<reference key="1">
    <citation type="journal article" date="1984" name="J. Mol. Biol.">
        <title>Rhodopseudomonas blastica atp operon. Nucleotide sequence and transcription.</title>
        <authorList>
            <person name="Tybulewicz V.L.J."/>
            <person name="Falk G."/>
            <person name="Walker J.E."/>
        </authorList>
    </citation>
    <scope>NUCLEOTIDE SEQUENCE [GENOMIC DNA]</scope>
</reference>
<evidence type="ECO:0000250" key="1"/>
<evidence type="ECO:0000305" key="2"/>
<proteinExistence type="inferred from homology"/>